<name>ENLYS_BPPZA</name>
<proteinExistence type="inferred from homology"/>
<dbReference type="EC" id="3.2.1.17" evidence="2"/>
<dbReference type="EMBL" id="M11813">
    <property type="protein sequence ID" value="AAA88492.1"/>
    <property type="molecule type" value="Genomic_DNA"/>
</dbReference>
<dbReference type="PIR" id="A26215">
    <property type="entry name" value="WMBP15"/>
</dbReference>
<dbReference type="SMR" id="P07540"/>
<dbReference type="CAZy" id="CBM50">
    <property type="family name" value="Carbohydrate-Binding Module Family 50"/>
</dbReference>
<dbReference type="CAZy" id="GH24">
    <property type="family name" value="Glycoside Hydrolase Family 24"/>
</dbReference>
<dbReference type="Proteomes" id="UP000000855">
    <property type="component" value="Segment"/>
</dbReference>
<dbReference type="GO" id="GO:0030430">
    <property type="term" value="C:host cell cytoplasm"/>
    <property type="evidence" value="ECO:0007669"/>
    <property type="project" value="UniProtKB-SubCell"/>
</dbReference>
<dbReference type="GO" id="GO:0003796">
    <property type="term" value="F:lysozyme activity"/>
    <property type="evidence" value="ECO:0007669"/>
    <property type="project" value="UniProtKB-UniRule"/>
</dbReference>
<dbReference type="GO" id="GO:0016998">
    <property type="term" value="P:cell wall macromolecule catabolic process"/>
    <property type="evidence" value="ECO:0007669"/>
    <property type="project" value="InterPro"/>
</dbReference>
<dbReference type="GO" id="GO:0042742">
    <property type="term" value="P:defense response to bacterium"/>
    <property type="evidence" value="ECO:0007669"/>
    <property type="project" value="UniProtKB-KW"/>
</dbReference>
<dbReference type="GO" id="GO:0009253">
    <property type="term" value="P:peptidoglycan catabolic process"/>
    <property type="evidence" value="ECO:0007669"/>
    <property type="project" value="UniProtKB-UniRule"/>
</dbReference>
<dbReference type="GO" id="GO:0044659">
    <property type="term" value="P:viral release from host cell by cytolysis"/>
    <property type="evidence" value="ECO:0007669"/>
    <property type="project" value="UniProtKB-UniRule"/>
</dbReference>
<dbReference type="CDD" id="cd00118">
    <property type="entry name" value="LysM"/>
    <property type="match status" value="2"/>
</dbReference>
<dbReference type="CDD" id="cd00737">
    <property type="entry name" value="lyz_endolysin_autolysin"/>
    <property type="match status" value="1"/>
</dbReference>
<dbReference type="FunFam" id="1.10.530.40:FF:000004">
    <property type="entry name" value="Lysozyme"/>
    <property type="match status" value="1"/>
</dbReference>
<dbReference type="Gene3D" id="1.10.530.40">
    <property type="match status" value="1"/>
</dbReference>
<dbReference type="Gene3D" id="3.10.350.10">
    <property type="entry name" value="LysM domain"/>
    <property type="match status" value="2"/>
</dbReference>
<dbReference type="HAMAP" id="MF_04110">
    <property type="entry name" value="ENDOLYSIN_T4"/>
    <property type="match status" value="1"/>
</dbReference>
<dbReference type="InterPro" id="IPR051018">
    <property type="entry name" value="Bacteriophage_GH24"/>
</dbReference>
<dbReference type="InterPro" id="IPR033907">
    <property type="entry name" value="Endolysin_autolysin"/>
</dbReference>
<dbReference type="InterPro" id="IPR034690">
    <property type="entry name" value="Endolysin_T4_type"/>
</dbReference>
<dbReference type="InterPro" id="IPR002196">
    <property type="entry name" value="Glyco_hydro_24"/>
</dbReference>
<dbReference type="InterPro" id="IPR018392">
    <property type="entry name" value="LysM_dom"/>
</dbReference>
<dbReference type="InterPro" id="IPR036779">
    <property type="entry name" value="LysM_dom_sf"/>
</dbReference>
<dbReference type="InterPro" id="IPR023346">
    <property type="entry name" value="Lysozyme-like_dom_sf"/>
</dbReference>
<dbReference type="InterPro" id="IPR023347">
    <property type="entry name" value="Lysozyme_dom_sf"/>
</dbReference>
<dbReference type="PANTHER" id="PTHR38107">
    <property type="match status" value="1"/>
</dbReference>
<dbReference type="PANTHER" id="PTHR38107:SF3">
    <property type="entry name" value="LYSOZYME RRRD-RELATED"/>
    <property type="match status" value="1"/>
</dbReference>
<dbReference type="Pfam" id="PF01476">
    <property type="entry name" value="LysM"/>
    <property type="match status" value="2"/>
</dbReference>
<dbReference type="Pfam" id="PF00959">
    <property type="entry name" value="Phage_lysozyme"/>
    <property type="match status" value="1"/>
</dbReference>
<dbReference type="SMART" id="SM00257">
    <property type="entry name" value="LysM"/>
    <property type="match status" value="2"/>
</dbReference>
<dbReference type="SUPFAM" id="SSF54106">
    <property type="entry name" value="LysM domain"/>
    <property type="match status" value="2"/>
</dbReference>
<dbReference type="SUPFAM" id="SSF53955">
    <property type="entry name" value="Lysozyme-like"/>
    <property type="match status" value="1"/>
</dbReference>
<dbReference type="PROSITE" id="PS51782">
    <property type="entry name" value="LYSM"/>
    <property type="match status" value="2"/>
</dbReference>
<protein>
    <recommendedName>
        <fullName evidence="2">Endolysin</fullName>
        <ecNumber evidence="2">3.2.1.17</ecNumber>
    </recommendedName>
    <alternativeName>
        <fullName evidence="2">Lysis protein</fullName>
    </alternativeName>
    <alternativeName>
        <fullName evidence="2">Lysozyme</fullName>
    </alternativeName>
    <alternativeName>
        <fullName evidence="2">Muramidase</fullName>
    </alternativeName>
    <alternativeName>
        <fullName>Protein p15</fullName>
    </alternativeName>
</protein>
<accession>P07540</accession>
<sequence length="258" mass="28052">MQISQAGINLIKSFEGLQLKAYKAVPTEKHYTIGYGHYGSDVSPRQVITAKQAEDMLRDDVQAFVDGVNKALKVSVTQNQFDALVSFAYNVGLGAFRSSSLLEYLNEGRTALAAAEFPRWNKSGGKVYQGLVNRRAQEQALFNSGTPKNVSRGTSSSKVTPKYKVKSGDNLTKIAKKHNTTVATLLKLNPSIKDPNMIRVGQTINVTGSGGKTHKVKSGDTLSKIAVDNKTTVSRLMSLNPEITNPNHIKVGQTIRLS</sequence>
<organismHost>
    <name type="scientific">Bacillus subtilis</name>
    <dbReference type="NCBI Taxonomy" id="1423"/>
</organismHost>
<keyword id="KW-0929">Antimicrobial</keyword>
<keyword id="KW-0081">Bacteriolytic enzyme</keyword>
<keyword id="KW-0204">Cytolysis</keyword>
<keyword id="KW-0326">Glycosidase</keyword>
<keyword id="KW-0578">Host cell lysis by virus</keyword>
<keyword id="KW-1035">Host cytoplasm</keyword>
<keyword id="KW-0378">Hydrolase</keyword>
<keyword id="KW-1188">Viral release from host cell</keyword>
<reference key="1">
    <citation type="journal article" date="1986" name="Gene">
        <title>Nucleotide sequence of the late region of Bacillus subtilis phage PZA, a close relative of phi 29.</title>
        <authorList>
            <person name="Paces V."/>
            <person name="Vlcek C."/>
            <person name="Urbanek P."/>
        </authorList>
    </citation>
    <scope>NUCLEOTIDE SEQUENCE [GENOMIC DNA]</scope>
</reference>
<gene>
    <name type="primary">15</name>
</gene>
<feature type="chain" id="PRO_0000218106" description="Endolysin">
    <location>
        <begin position="1"/>
        <end position="258"/>
    </location>
</feature>
<feature type="active site" description="Proton donor/acceptor" evidence="2">
    <location>
        <position position="15"/>
    </location>
</feature>
<evidence type="ECO:0000250" key="1">
    <source>
        <dbReference type="UniProtKB" id="P11187"/>
    </source>
</evidence>
<evidence type="ECO:0000255" key="2">
    <source>
        <dbReference type="HAMAP-Rule" id="MF_04110"/>
    </source>
</evidence>
<organism>
    <name type="scientific">Bacillus phage PZA</name>
    <name type="common">Bacteriophage PZA</name>
    <dbReference type="NCBI Taxonomy" id="10757"/>
    <lineage>
        <taxon>Viruses</taxon>
        <taxon>Duplodnaviria</taxon>
        <taxon>Heunggongvirae</taxon>
        <taxon>Uroviricota</taxon>
        <taxon>Caudoviricetes</taxon>
        <taxon>Salasmaviridae</taxon>
        <taxon>Picovirinae</taxon>
        <taxon>Salasvirus</taxon>
        <taxon>Salasvirus PZA</taxon>
    </lineage>
</organism>
<comment type="function">
    <text evidence="2">Endolysin with lysozyme activity that degrades host peptidoglycans and participates with the holin and spanin proteins in the sequential events which lead to the programmed host cell lysis releasing the mature viral particles. Once the holin has permeabilized the host cell membrane, the endolysin can reach the periplasm and break down the peptidoglycan layer.</text>
</comment>
<comment type="catalytic activity">
    <reaction evidence="2">
        <text>Hydrolysis of (1-&gt;4)-beta-linkages between N-acetylmuramic acid and N-acetyl-D-glucosamine residues in a peptidoglycan and between N-acetyl-D-glucosamine residues in chitodextrins.</text>
        <dbReference type="EC" id="3.2.1.17"/>
    </reaction>
</comment>
<comment type="subcellular location">
    <subcellularLocation>
        <location evidence="2">Host cytoplasm</location>
    </subcellularLocation>
    <text evidence="2">The endolysin is cytoplasmic, but can reach the periplasmic space with the help of the holins which disrupt the host cell membrane.</text>
</comment>
<comment type="domain">
    <text evidence="1">LysM domains are thought to be involved in peptidoglycan binding.</text>
</comment>
<comment type="similarity">
    <text evidence="2">Belongs to the glycosyl hydrolase 24 family.</text>
</comment>
<comment type="caution">
    <text evidence="2">Lacks the conserved Asp active site.</text>
</comment>